<gene>
    <name type="primary">PBX1</name>
    <name type="synonym">PRL</name>
</gene>
<proteinExistence type="evidence at protein level"/>
<accession>P40424</accession>
<accession>B4DSC1</accession>
<accession>F5H4U9</accession>
<accession>Q5T488</accession>
<reference key="1">
    <citation type="journal article" date="1991" name="Mol. Cell. Biol.">
        <title>PBX2 and PBX3, new homeobox genes with extensive homology to the human proto-oncogene PBX1.</title>
        <authorList>
            <person name="Monica K."/>
            <person name="Galili N."/>
            <person name="Nourse J."/>
            <person name="Saltman D."/>
            <person name="Cleary M.L."/>
        </authorList>
    </citation>
    <scope>NUCLEOTIDE SEQUENCE [MRNA] (ISOFORM PBX1A)</scope>
</reference>
<reference key="2">
    <citation type="journal article" date="2001" name="Biochim. Biophys. Acta">
        <title>Analysis of PBX1 as a candidate gene for type 2 diabetes mellitus in Pima Indians.</title>
        <authorList>
            <person name="Thameem F."/>
            <person name="Wolford J.K."/>
            <person name="Bogardus C."/>
            <person name="Prochazka M."/>
        </authorList>
    </citation>
    <scope>NUCLEOTIDE SEQUENCE [GENOMIC DNA] (ISOFORM PBX1A)</scope>
</reference>
<reference key="3">
    <citation type="journal article" date="2004" name="Nat. Genet.">
        <title>Complete sequencing and characterization of 21,243 full-length human cDNAs.</title>
        <authorList>
            <person name="Ota T."/>
            <person name="Suzuki Y."/>
            <person name="Nishikawa T."/>
            <person name="Otsuki T."/>
            <person name="Sugiyama T."/>
            <person name="Irie R."/>
            <person name="Wakamatsu A."/>
            <person name="Hayashi K."/>
            <person name="Sato H."/>
            <person name="Nagai K."/>
            <person name="Kimura K."/>
            <person name="Makita H."/>
            <person name="Sekine M."/>
            <person name="Obayashi M."/>
            <person name="Nishi T."/>
            <person name="Shibahara T."/>
            <person name="Tanaka T."/>
            <person name="Ishii S."/>
            <person name="Yamamoto J."/>
            <person name="Saito K."/>
            <person name="Kawai Y."/>
            <person name="Isono Y."/>
            <person name="Nakamura Y."/>
            <person name="Nagahari K."/>
            <person name="Murakami K."/>
            <person name="Yasuda T."/>
            <person name="Iwayanagi T."/>
            <person name="Wagatsuma M."/>
            <person name="Shiratori A."/>
            <person name="Sudo H."/>
            <person name="Hosoiri T."/>
            <person name="Kaku Y."/>
            <person name="Kodaira H."/>
            <person name="Kondo H."/>
            <person name="Sugawara M."/>
            <person name="Takahashi M."/>
            <person name="Kanda K."/>
            <person name="Yokoi T."/>
            <person name="Furuya T."/>
            <person name="Kikkawa E."/>
            <person name="Omura Y."/>
            <person name="Abe K."/>
            <person name="Kamihara K."/>
            <person name="Katsuta N."/>
            <person name="Sato K."/>
            <person name="Tanikawa M."/>
            <person name="Yamazaki M."/>
            <person name="Ninomiya K."/>
            <person name="Ishibashi T."/>
            <person name="Yamashita H."/>
            <person name="Murakawa K."/>
            <person name="Fujimori K."/>
            <person name="Tanai H."/>
            <person name="Kimata M."/>
            <person name="Watanabe M."/>
            <person name="Hiraoka S."/>
            <person name="Chiba Y."/>
            <person name="Ishida S."/>
            <person name="Ono Y."/>
            <person name="Takiguchi S."/>
            <person name="Watanabe S."/>
            <person name="Yosida M."/>
            <person name="Hotuta T."/>
            <person name="Kusano J."/>
            <person name="Kanehori K."/>
            <person name="Takahashi-Fujii A."/>
            <person name="Hara H."/>
            <person name="Tanase T.-O."/>
            <person name="Nomura Y."/>
            <person name="Togiya S."/>
            <person name="Komai F."/>
            <person name="Hara R."/>
            <person name="Takeuchi K."/>
            <person name="Arita M."/>
            <person name="Imose N."/>
            <person name="Musashino K."/>
            <person name="Yuuki H."/>
            <person name="Oshima A."/>
            <person name="Sasaki N."/>
            <person name="Aotsuka S."/>
            <person name="Yoshikawa Y."/>
            <person name="Matsunawa H."/>
            <person name="Ichihara T."/>
            <person name="Shiohata N."/>
            <person name="Sano S."/>
            <person name="Moriya S."/>
            <person name="Momiyama H."/>
            <person name="Satoh N."/>
            <person name="Takami S."/>
            <person name="Terashima Y."/>
            <person name="Suzuki O."/>
            <person name="Nakagawa S."/>
            <person name="Senoh A."/>
            <person name="Mizoguchi H."/>
            <person name="Goto Y."/>
            <person name="Shimizu F."/>
            <person name="Wakebe H."/>
            <person name="Hishigaki H."/>
            <person name="Watanabe T."/>
            <person name="Sugiyama A."/>
            <person name="Takemoto M."/>
            <person name="Kawakami B."/>
            <person name="Yamazaki M."/>
            <person name="Watanabe K."/>
            <person name="Kumagai A."/>
            <person name="Itakura S."/>
            <person name="Fukuzumi Y."/>
            <person name="Fujimori Y."/>
            <person name="Komiyama M."/>
            <person name="Tashiro H."/>
            <person name="Tanigami A."/>
            <person name="Fujiwara T."/>
            <person name="Ono T."/>
            <person name="Yamada K."/>
            <person name="Fujii Y."/>
            <person name="Ozaki K."/>
            <person name="Hirao M."/>
            <person name="Ohmori Y."/>
            <person name="Kawabata A."/>
            <person name="Hikiji T."/>
            <person name="Kobatake N."/>
            <person name="Inagaki H."/>
            <person name="Ikema Y."/>
            <person name="Okamoto S."/>
            <person name="Okitani R."/>
            <person name="Kawakami T."/>
            <person name="Noguchi S."/>
            <person name="Itoh T."/>
            <person name="Shigeta K."/>
            <person name="Senba T."/>
            <person name="Matsumura K."/>
            <person name="Nakajima Y."/>
            <person name="Mizuno T."/>
            <person name="Morinaga M."/>
            <person name="Sasaki M."/>
            <person name="Togashi T."/>
            <person name="Oyama M."/>
            <person name="Hata H."/>
            <person name="Watanabe M."/>
            <person name="Komatsu T."/>
            <person name="Mizushima-Sugano J."/>
            <person name="Satoh T."/>
            <person name="Shirai Y."/>
            <person name="Takahashi Y."/>
            <person name="Nakagawa K."/>
            <person name="Okumura K."/>
            <person name="Nagase T."/>
            <person name="Nomura N."/>
            <person name="Kikuchi H."/>
            <person name="Masuho Y."/>
            <person name="Yamashita R."/>
            <person name="Nakai K."/>
            <person name="Yada T."/>
            <person name="Nakamura Y."/>
            <person name="Ohara O."/>
            <person name="Isogai T."/>
            <person name="Sugano S."/>
        </authorList>
    </citation>
    <scope>NUCLEOTIDE SEQUENCE [LARGE SCALE MRNA] (ISOFORM 3)</scope>
    <scope>VARIANT SER-31</scope>
    <source>
        <tissue>Brain</tissue>
    </source>
</reference>
<reference key="4">
    <citation type="journal article" date="2006" name="Nature">
        <title>The DNA sequence and biological annotation of human chromosome 1.</title>
        <authorList>
            <person name="Gregory S.G."/>
            <person name="Barlow K.F."/>
            <person name="McLay K.E."/>
            <person name="Kaul R."/>
            <person name="Swarbreck D."/>
            <person name="Dunham A."/>
            <person name="Scott C.E."/>
            <person name="Howe K.L."/>
            <person name="Woodfine K."/>
            <person name="Spencer C.C.A."/>
            <person name="Jones M.C."/>
            <person name="Gillson C."/>
            <person name="Searle S."/>
            <person name="Zhou Y."/>
            <person name="Kokocinski F."/>
            <person name="McDonald L."/>
            <person name="Evans R."/>
            <person name="Phillips K."/>
            <person name="Atkinson A."/>
            <person name="Cooper R."/>
            <person name="Jones C."/>
            <person name="Hall R.E."/>
            <person name="Andrews T.D."/>
            <person name="Lloyd C."/>
            <person name="Ainscough R."/>
            <person name="Almeida J.P."/>
            <person name="Ambrose K.D."/>
            <person name="Anderson F."/>
            <person name="Andrew R.W."/>
            <person name="Ashwell R.I.S."/>
            <person name="Aubin K."/>
            <person name="Babbage A.K."/>
            <person name="Bagguley C.L."/>
            <person name="Bailey J."/>
            <person name="Beasley H."/>
            <person name="Bethel G."/>
            <person name="Bird C.P."/>
            <person name="Bray-Allen S."/>
            <person name="Brown J.Y."/>
            <person name="Brown A.J."/>
            <person name="Buckley D."/>
            <person name="Burton J."/>
            <person name="Bye J."/>
            <person name="Carder C."/>
            <person name="Chapman J.C."/>
            <person name="Clark S.Y."/>
            <person name="Clarke G."/>
            <person name="Clee C."/>
            <person name="Cobley V."/>
            <person name="Collier R.E."/>
            <person name="Corby N."/>
            <person name="Coville G.J."/>
            <person name="Davies J."/>
            <person name="Deadman R."/>
            <person name="Dunn M."/>
            <person name="Earthrowl M."/>
            <person name="Ellington A.G."/>
            <person name="Errington H."/>
            <person name="Frankish A."/>
            <person name="Frankland J."/>
            <person name="French L."/>
            <person name="Garner P."/>
            <person name="Garnett J."/>
            <person name="Gay L."/>
            <person name="Ghori M.R.J."/>
            <person name="Gibson R."/>
            <person name="Gilby L.M."/>
            <person name="Gillett W."/>
            <person name="Glithero R.J."/>
            <person name="Grafham D.V."/>
            <person name="Griffiths C."/>
            <person name="Griffiths-Jones S."/>
            <person name="Grocock R."/>
            <person name="Hammond S."/>
            <person name="Harrison E.S.I."/>
            <person name="Hart E."/>
            <person name="Haugen E."/>
            <person name="Heath P.D."/>
            <person name="Holmes S."/>
            <person name="Holt K."/>
            <person name="Howden P.J."/>
            <person name="Hunt A.R."/>
            <person name="Hunt S.E."/>
            <person name="Hunter G."/>
            <person name="Isherwood J."/>
            <person name="James R."/>
            <person name="Johnson C."/>
            <person name="Johnson D."/>
            <person name="Joy A."/>
            <person name="Kay M."/>
            <person name="Kershaw J.K."/>
            <person name="Kibukawa M."/>
            <person name="Kimberley A.M."/>
            <person name="King A."/>
            <person name="Knights A.J."/>
            <person name="Lad H."/>
            <person name="Laird G."/>
            <person name="Lawlor S."/>
            <person name="Leongamornlert D.A."/>
            <person name="Lloyd D.M."/>
            <person name="Loveland J."/>
            <person name="Lovell J."/>
            <person name="Lush M.J."/>
            <person name="Lyne R."/>
            <person name="Martin S."/>
            <person name="Mashreghi-Mohammadi M."/>
            <person name="Matthews L."/>
            <person name="Matthews N.S.W."/>
            <person name="McLaren S."/>
            <person name="Milne S."/>
            <person name="Mistry S."/>
            <person name="Moore M.J.F."/>
            <person name="Nickerson T."/>
            <person name="O'Dell C.N."/>
            <person name="Oliver K."/>
            <person name="Palmeiri A."/>
            <person name="Palmer S.A."/>
            <person name="Parker A."/>
            <person name="Patel D."/>
            <person name="Pearce A.V."/>
            <person name="Peck A.I."/>
            <person name="Pelan S."/>
            <person name="Phelps K."/>
            <person name="Phillimore B.J."/>
            <person name="Plumb R."/>
            <person name="Rajan J."/>
            <person name="Raymond C."/>
            <person name="Rouse G."/>
            <person name="Saenphimmachak C."/>
            <person name="Sehra H.K."/>
            <person name="Sheridan E."/>
            <person name="Shownkeen R."/>
            <person name="Sims S."/>
            <person name="Skuce C.D."/>
            <person name="Smith M."/>
            <person name="Steward C."/>
            <person name="Subramanian S."/>
            <person name="Sycamore N."/>
            <person name="Tracey A."/>
            <person name="Tromans A."/>
            <person name="Van Helmond Z."/>
            <person name="Wall M."/>
            <person name="Wallis J.M."/>
            <person name="White S."/>
            <person name="Whitehead S.L."/>
            <person name="Wilkinson J.E."/>
            <person name="Willey D.L."/>
            <person name="Williams H."/>
            <person name="Wilming L."/>
            <person name="Wray P.W."/>
            <person name="Wu Z."/>
            <person name="Coulson A."/>
            <person name="Vaudin M."/>
            <person name="Sulston J.E."/>
            <person name="Durbin R.M."/>
            <person name="Hubbard T."/>
            <person name="Wooster R."/>
            <person name="Dunham I."/>
            <person name="Carter N.P."/>
            <person name="McVean G."/>
            <person name="Ross M.T."/>
            <person name="Harrow J."/>
            <person name="Olson M.V."/>
            <person name="Beck S."/>
            <person name="Rogers J."/>
            <person name="Bentley D.R."/>
        </authorList>
    </citation>
    <scope>NUCLEOTIDE SEQUENCE [LARGE SCALE GENOMIC DNA]</scope>
</reference>
<reference key="5">
    <citation type="journal article" date="2004" name="Genome Res.">
        <title>The status, quality, and expansion of the NIH full-length cDNA project: the Mammalian Gene Collection (MGC).</title>
        <authorList>
            <consortium name="The MGC Project Team"/>
        </authorList>
    </citation>
    <scope>NUCLEOTIDE SEQUENCE [LARGE SCALE MRNA] (ISOFORM PBX1A)</scope>
    <source>
        <tissue>Brain</tissue>
    </source>
</reference>
<reference key="6">
    <citation type="journal article" date="1990" name="Cell">
        <title>A new homeobox gene contributes the DNA binding domain of the t(1;19) translocation protein in pre-B ALL.</title>
        <authorList>
            <person name="Kamps M.P."/>
            <person name="Murre C."/>
            <person name="Sun X.-H."/>
            <person name="Baltimore D."/>
        </authorList>
    </citation>
    <scope>NUCLEOTIDE SEQUENCE [MRNA] OF 89-430</scope>
    <scope>CHROMOSOMAL TRANSLOCATION WITH TCF3</scope>
</reference>
<reference key="7">
    <citation type="journal article" date="1991" name="Blood">
        <title>The t(1;19)(q23;p13) results in consistent fusion of E2A and PBX1 coding sequences in acute lymphoblastic leukemias.</title>
        <authorList>
            <person name="Hunger S.P."/>
            <person name="Galili N."/>
            <person name="Carroll A.J."/>
            <person name="Crist W.M."/>
            <person name="Link M.P."/>
            <person name="Cleary M.L."/>
        </authorList>
    </citation>
    <scope>CHROMOSOMAL TRANSLOCATION WITH TCF3</scope>
</reference>
<reference key="8">
    <citation type="journal article" date="1993" name="Proc. Natl. Acad. Sci. U.S.A.">
        <title>Pbx1 is converted into a transcriptional activator upon acquiring the N-terminal region of E2A in pre-B-cell acute lymphoblastoid leukemia.</title>
        <authorList>
            <person name="van Dijk M.A."/>
            <person name="Voorhoeve P.M."/>
            <person name="Murre C."/>
        </authorList>
    </citation>
    <scope>FUNCTION</scope>
    <scope>CHROMOSOMAL TRANSLOCATION WITH TCF3</scope>
</reference>
<reference key="9">
    <citation type="journal article" date="1994" name="Mol. Cell. Biol.">
        <title>Fusion with E2A converts the Pbx1 homeodomain protein into a constitutive transcriptional activator in human leukemias carrying the t(1;19) translocation.</title>
        <authorList>
            <person name="Lu Q."/>
            <person name="Wright D.D."/>
            <person name="Kamps M.P."/>
        </authorList>
    </citation>
    <scope>CHARACTERIZATION</scope>
</reference>
<reference key="10">
    <citation type="journal article" date="1995" name="Mol. Cell. Biol.">
        <title>Both Pbx1 and E2A-Pbx1 bind the DNA motif ATCAATCAA cooperatively with the products of multiple murine Hox genes, some of which are themselves oncogenes.</title>
        <authorList>
            <person name="Lu Q."/>
            <person name="Knoepfler P.S."/>
            <person name="Scheele J."/>
            <person name="Wright D.D."/>
            <person name="Kamps M.P."/>
        </authorList>
    </citation>
    <scope>FUNCTION</scope>
    <scope>INTERACTION WITH HOXA5; HOXB7; HOXB8; HOXC8 AND HOXD4</scope>
</reference>
<reference key="11">
    <citation type="journal article" date="1997" name="Oncogene">
        <title>The highest affinity DNA element bound by Pbx complexes in t(1;19) leukemic cells fails to mediate cooperative DNA-binding or cooperative transactivation by E2a-Pbx1 and class I Hox proteins - evidence for selective targetting of E2a-Pbx1 to a subset of Pbx-recognition elements.</title>
        <authorList>
            <person name="Knoepfler P.S."/>
            <person name="Kamps M.P."/>
        </authorList>
    </citation>
    <scope>FUNCTION</scope>
    <scope>INTERACTION WITH HOXA1; HOXA5; HOXB7 AND HOXB8</scope>
</reference>
<reference key="12">
    <citation type="journal article" date="2000" name="J. Biol. Chem.">
        <title>Functional cloning and characterization of a novel nonhomeodomain protein that inhibits the binding of PBX1-HOX complexes to DNA.</title>
        <authorList>
            <person name="Abramovich C."/>
            <person name="Shen W.-F."/>
            <person name="Pineault N."/>
            <person name="Imren S."/>
            <person name="Montpetit B."/>
            <person name="Largman C."/>
            <person name="Humphries R.K."/>
        </authorList>
    </citation>
    <scope>INTERACTION WITH PBXIP1</scope>
</reference>
<reference key="13">
    <citation type="journal article" date="2003" name="Blood">
        <title>Homeodomain proteins MEIS1 and PBXs regulate the lineage-specific transcription of the platelet factor 4 gene.</title>
        <authorList>
            <person name="Okada Y."/>
            <person name="Nagai R."/>
            <person name="Sato T."/>
            <person name="Matsuura E."/>
            <person name="Minami T."/>
            <person name="Morita I."/>
            <person name="Doi T."/>
        </authorList>
    </citation>
    <scope>FUNCTION</scope>
    <scope>INTERACTION WITH MEIS1</scope>
</reference>
<reference key="14">
    <citation type="journal article" date="2005" name="Mol. Cell. Biol.">
        <title>FOXC1 transcriptional regulatory activity is impaired by PBX1 in a filamin A-mediated manner.</title>
        <authorList>
            <person name="Berry F.B."/>
            <person name="O'Neill M.A."/>
            <person name="Coca-Prados M."/>
            <person name="Walter M.A."/>
        </authorList>
    </citation>
    <scope>INTERACTION WITH FOXC1</scope>
</reference>
<reference key="15">
    <citation type="journal article" date="2009" name="Biochem. J.">
        <title>PBX1 and MEIS1 up-regulate SOX3 gene expression by direct interaction with a consensus binding site within the basal promoter region.</title>
        <authorList>
            <person name="Mojsin M."/>
            <person name="Stevanovic M."/>
        </authorList>
    </citation>
    <scope>INTERACTION WITH MEIS1</scope>
</reference>
<reference key="16">
    <citation type="journal article" date="2010" name="FEBS J.">
        <title>An autoinhibitory effect of the homothorax domain of Meis2.</title>
        <authorList>
            <person name="Hyman-Walsh C."/>
            <person name="Bjerke G.A."/>
            <person name="Wotton D."/>
        </authorList>
    </citation>
    <scope>INTERACTION WITH MEIS2</scope>
</reference>
<reference key="17">
    <citation type="journal article" date="2010" name="Leuk. Res.">
        <title>MEIS proteins as partners of the TLX1/HOX11 oncoprotein.</title>
        <authorList>
            <person name="Milech N."/>
            <person name="Gottardo N.G."/>
            <person name="Ford J."/>
            <person name="D'Souza D."/>
            <person name="Greene W.K."/>
            <person name="Kees U.R."/>
            <person name="Watt P.M."/>
        </authorList>
    </citation>
    <scope>INTERACTION WITH TLX1</scope>
</reference>
<reference key="18">
    <citation type="journal article" date="2010" name="Sci. Signal.">
        <title>Quantitative phosphoproteomics reveals widespread full phosphorylation site occupancy during mitosis.</title>
        <authorList>
            <person name="Olsen J.V."/>
            <person name="Vermeulen M."/>
            <person name="Santamaria A."/>
            <person name="Kumar C."/>
            <person name="Miller M.L."/>
            <person name="Jensen L.J."/>
            <person name="Gnad F."/>
            <person name="Cox J."/>
            <person name="Jensen T.S."/>
            <person name="Nigg E.A."/>
            <person name="Brunak S."/>
            <person name="Mann M."/>
        </authorList>
    </citation>
    <scope>IDENTIFICATION BY MASS SPECTROMETRY [LARGE SCALE ANALYSIS]</scope>
    <source>
        <tissue>Cervix carcinoma</tissue>
    </source>
</reference>
<reference key="19">
    <citation type="journal article" date="2011" name="BMC Syst. Biol.">
        <title>Initial characterization of the human central proteome.</title>
        <authorList>
            <person name="Burkard T.R."/>
            <person name="Planyavsky M."/>
            <person name="Kaupe I."/>
            <person name="Breitwieser F.P."/>
            <person name="Buerckstuemmer T."/>
            <person name="Bennett K.L."/>
            <person name="Superti-Furga G."/>
            <person name="Colinge J."/>
        </authorList>
    </citation>
    <scope>IDENTIFICATION BY MASS SPECTROMETRY [LARGE SCALE ANALYSIS]</scope>
</reference>
<reference key="20">
    <citation type="journal article" date="2011" name="Mol. Cell. Biol.">
        <title>Cooperative transcriptional activation by Klf4, Meis2, and Pbx1.</title>
        <authorList>
            <person name="Bjerke G.A."/>
            <person name="Hyman-Walsh C."/>
            <person name="Wotton D."/>
        </authorList>
    </citation>
    <scope>FUNCTION</scope>
    <scope>INTERACTION WITH SP1; SP3 AND KLF4</scope>
</reference>
<reference key="21">
    <citation type="journal article" date="2017" name="J. Med. Genet.">
        <title>PBX1 haploinsufficiency leads to syndromic congenital anomalies of the kidney and urinary tract (CAKUT) in humans.</title>
        <authorList>
            <person name="Le Tanno P."/>
            <person name="Breton J."/>
            <person name="Bidart M."/>
            <person name="Satre V."/>
            <person name="Harbuz R."/>
            <person name="Ray P.F."/>
            <person name="Bosson C."/>
            <person name="Dieterich K."/>
            <person name="Jaillard S."/>
            <person name="Odent S."/>
            <person name="Poke G."/>
            <person name="Beddow R."/>
            <person name="Digilio M.C."/>
            <person name="Novelli A."/>
            <person name="Bernardini L."/>
            <person name="Pisanti M.A."/>
            <person name="Mackenroth L."/>
            <person name="Hackmann K."/>
            <person name="Vogel I."/>
            <person name="Christensen R."/>
            <person name="Fokstuen S."/>
            <person name="Bena F."/>
            <person name="Amblard F."/>
            <person name="Devillard F."/>
            <person name="Vieville G."/>
            <person name="Apostolou A."/>
            <person name="Jouk P.S."/>
            <person name="Guebre-Egziabher F."/>
            <person name="Sartelet H."/>
            <person name="Coutton C."/>
        </authorList>
    </citation>
    <scope>SUBCELLULAR LOCATION</scope>
    <scope>INVOLVEMENT IN CAKUTHED</scope>
    <scope>TISSUE SPECIFICITY</scope>
</reference>
<reference key="22">
    <citation type="journal article" date="2020" name="Am. J. Hum. Genet.">
        <title>Gain-of-function MN1 truncation variants cause a recognizable syndrome with craniofacial and brain abnormalities.</title>
        <authorList>
            <person name="Miyake N."/>
            <person name="Takahashi H."/>
            <person name="Nakamura K."/>
            <person name="Isidor B."/>
            <person name="Hiraki Y."/>
            <person name="Koshimizu E."/>
            <person name="Shiina M."/>
            <person name="Sasaki K."/>
            <person name="Suzuki H."/>
            <person name="Abe R."/>
            <person name="Kimura Y."/>
            <person name="Akiyama T."/>
            <person name="Tomizawa S.I."/>
            <person name="Hirose T."/>
            <person name="Hamanaka K."/>
            <person name="Miyatake S."/>
            <person name="Mitsuhashi S."/>
            <person name="Mizuguchi T."/>
            <person name="Takata A."/>
            <person name="Obo K."/>
            <person name="Kato M."/>
            <person name="Ogata K."/>
            <person name="Matsumoto N."/>
        </authorList>
    </citation>
    <scope>INTERACTION WITH MN1</scope>
</reference>
<reference key="23">
    <citation type="journal article" date="1999" name="Cell">
        <title>Structure of a HoxB1-Pbx1 heterodimer bound to DNA: role of the hexapeptide and a fourth homeodomain helix in complex formation.</title>
        <authorList>
            <person name="Piper D.E."/>
            <person name="Batchelor A.H."/>
            <person name="Chang C.-P."/>
            <person name="Cleary M.L."/>
            <person name="Wolberger C."/>
        </authorList>
    </citation>
    <scope>X-RAY CRYSTALLOGRAPHY (2.35 ANGSTROMS) OF 233-319 IN COMPLEX WITH HOXB1</scope>
</reference>
<reference key="24">
    <citation type="journal article" date="2017" name="J. Am. Soc. Nephrol.">
        <title>Targeted exome sequencing identifies PBX1 as involved in monogenic congenital anomalies of the kidney and urinary tract.</title>
        <authorList>
            <person name="Heidet L."/>
            <person name="Moriniere V."/>
            <person name="Henry C."/>
            <person name="De Tomasi L."/>
            <person name="Reilly M.L."/>
            <person name="Humbert C."/>
            <person name="Alibeu O."/>
            <person name="Fourrage C."/>
            <person name="Bole-Feysot C."/>
            <person name="Nitschke P."/>
            <person name="Tores F."/>
            <person name="Bras M."/>
            <person name="Jeanpierre M."/>
            <person name="Pietrement C."/>
            <person name="Gaillard D."/>
            <person name="Gonzales M."/>
            <person name="Novo R."/>
            <person name="Schaefer E."/>
            <person name="Roume J."/>
            <person name="Martinovic J."/>
            <person name="Malan V."/>
            <person name="Salomon R."/>
            <person name="Saunier S."/>
            <person name="Antignac C."/>
            <person name="Jeanpierre C."/>
        </authorList>
    </citation>
    <scope>VARIANT CAKUTHED 184-ARG--ASN-430 DEL</scope>
</reference>
<name>PBX1_HUMAN</name>
<feature type="chain" id="PRO_0000049235" description="Pre-B-cell leukemia transcription factor 1">
    <location>
        <begin position="1"/>
        <end position="430"/>
    </location>
</feature>
<feature type="domain" description="PBC" evidence="3">
    <location>
        <begin position="38"/>
        <end position="232"/>
    </location>
</feature>
<feature type="DNA-binding region" description="Homeobox; TALE-type" evidence="2">
    <location>
        <begin position="233"/>
        <end position="295"/>
    </location>
</feature>
<feature type="region of interest" description="Disordered" evidence="4">
    <location>
        <begin position="1"/>
        <end position="40"/>
    </location>
</feature>
<feature type="region of interest" description="PBC-A" evidence="3">
    <location>
        <begin position="45"/>
        <end position="124"/>
    </location>
</feature>
<feature type="region of interest" description="PBC-B" evidence="3">
    <location>
        <begin position="127"/>
        <end position="232"/>
    </location>
</feature>
<feature type="region of interest" description="Disordered" evidence="4">
    <location>
        <begin position="317"/>
        <end position="338"/>
    </location>
</feature>
<feature type="region of interest" description="Disordered" evidence="4">
    <location>
        <begin position="395"/>
        <end position="430"/>
    </location>
</feature>
<feature type="compositionally biased region" description="Low complexity" evidence="4">
    <location>
        <begin position="323"/>
        <end position="338"/>
    </location>
</feature>
<feature type="compositionally biased region" description="Polar residues" evidence="4">
    <location>
        <begin position="407"/>
        <end position="418"/>
    </location>
</feature>
<feature type="site" description="Breakpoint for translocation to form TCF3-PBX1 oncogene">
    <location>
        <begin position="88"/>
        <end position="89"/>
    </location>
</feature>
<feature type="site" description="Required for binding to the NFIL3 promoter" evidence="1">
    <location>
        <position position="286"/>
    </location>
</feature>
<feature type="splice variant" id="VSP_002271" description="In isoform PBX1b." evidence="23">
    <original>SSSSFNMSNSGDLF</original>
    <variation>GYPSPCYQPDRRIQ</variation>
    <location>
        <begin position="334"/>
        <end position="347"/>
    </location>
</feature>
<feature type="splice variant" id="VSP_002272" description="In isoform PBX1b." evidence="23">
    <location>
        <begin position="348"/>
        <end position="430"/>
    </location>
</feature>
<feature type="splice variant" id="VSP_044499" description="In isoform 3." evidence="22">
    <original>ANGGWQDATTPSSVTSPTEGPGSVHSDTSN</original>
    <variation>HLPRHPRQAHYHFRLPTWHP</variation>
    <location>
        <begin position="401"/>
        <end position="430"/>
    </location>
</feature>
<feature type="sequence variant" id="VAR_068904" description="In dbSNP:rs2275558." evidence="8">
    <original>G</original>
    <variation>S</variation>
    <location>
        <position position="31"/>
    </location>
</feature>
<feature type="sequence variant" id="VAR_079369" description="In CAKUTHED; uncertain significance." evidence="17">
    <location>
        <begin position="184"/>
        <end position="430"/>
    </location>
</feature>
<feature type="sequence conflict" description="In Ref. 3; BAG61583." evidence="23" ref="3">
    <original>Q</original>
    <variation>H</variation>
    <location>
        <position position="351"/>
    </location>
</feature>
<feature type="helix" evidence="24">
    <location>
        <begin position="242"/>
        <end position="254"/>
    </location>
</feature>
<feature type="turn" evidence="24">
    <location>
        <begin position="255"/>
        <end position="257"/>
    </location>
</feature>
<feature type="helix" evidence="24">
    <location>
        <begin position="263"/>
        <end position="273"/>
    </location>
</feature>
<feature type="helix" evidence="24">
    <location>
        <begin position="277"/>
        <end position="293"/>
    </location>
</feature>
<feature type="turn" evidence="24">
    <location>
        <begin position="295"/>
        <end position="300"/>
    </location>
</feature>
<feature type="helix" evidence="24">
    <location>
        <begin position="301"/>
        <end position="304"/>
    </location>
</feature>
<sequence length="430" mass="46626">MDEQPRLMHSHAGVGMAGHPGLSQHLQDGAGGTEGEGGRKQDIGDILQQIMTITDQSLDEAQARKHALNCHRMKPALFNVLCEIKEKTVLSIRGAQEEEPTDPQLMRLDNMLLAEGVAGPEKGGGSAAAAAAAAASGGAGSDNSVEHSDYRAKLSQIRQIYHTELEKYEQACNEFTTHVMNLLREQSRTRPISPKEIERMVSIIHRKFSSIQMQLKQSTCEAVMILRSRFLDARRKRRNFNKQATEILNEYFYSHLSNPYPSEEAKEELAKKCGITVSQVSNWFGNKRIRYKKNIGKFQEEANIYAAKTAVTATNVSAHGSQANSPSTPNSAGSSSSFNMSNSGDLFMSVQSLNGDSYQGAQVGANVQSQVDTLRHVISQTGGYSDGLAASQMYSPQGISANGGWQDATTPSSVTSPTEGPGSVHSDTSN</sequence>
<organism>
    <name type="scientific">Homo sapiens</name>
    <name type="common">Human</name>
    <dbReference type="NCBI Taxonomy" id="9606"/>
    <lineage>
        <taxon>Eukaryota</taxon>
        <taxon>Metazoa</taxon>
        <taxon>Chordata</taxon>
        <taxon>Craniata</taxon>
        <taxon>Vertebrata</taxon>
        <taxon>Euteleostomi</taxon>
        <taxon>Mammalia</taxon>
        <taxon>Eutheria</taxon>
        <taxon>Euarchontoglires</taxon>
        <taxon>Primates</taxon>
        <taxon>Haplorrhini</taxon>
        <taxon>Catarrhini</taxon>
        <taxon>Hominidae</taxon>
        <taxon>Homo</taxon>
    </lineage>
</organism>
<comment type="function">
    <text evidence="1 7 15 19 20 21">Transcription factor which binds the DNA sequence 5'-TGATTGAT-3' as part of a heterodimer with HOX proteins such as HOXA1, HOXA5, HOXB7 and HOXB8 (PubMed:9191052). Binds to the DNA sequence 5'-TGATTGAC-3' in complex with a nuclear factor which is not a class I HOX protein (PubMed:9191052). Has also been shown to bind the DNA sequence 5'-ATCAATCAA-3' cooperatively with HOXA5, HOXB7, HOXB8, HOXC8 and HOXD4 (PubMed:7791786, PubMed:8327485). Acts as a transcriptional activator of PF4 in complex with MEIS1 (PubMed:12609849). Also activates transcription of SOX3 in complex with MEIS1 by binding to the 5'-TGATTGAC-3' consensus sequence (By similarity). In natural killer cells, binds to the NFIL3 promoter and acts as a transcriptional activator of NFIL3, promoting natural killer cell development (By similarity). Plays a role in the cAMP-dependent regulation of CYP17A1 gene expression via its cAMP-regulatory sequence (CRS1) (By similarity). Probably in complex with MEIS2, involved in transcriptional regulation by KLF4 (PubMed:21746878). Acts as a transcriptional activator of NKX2-5 and a transcriptional repressor of CDKN2B (By similarity). Together with NKX2-5, required for spleen development through a mechanism that involves CDKN2B repression (By similarity).</text>
</comment>
<comment type="function">
    <molecule>Isoform PBX1b</molecule>
    <text evidence="1">As part of a PDX1:PBX1b:MEIS2B complex in pancreatic acinar cells, is involved in the transcriptional activation of the ELA1 enhancer; the complex binds to the enhancer B element and cooperates with the transcription factor 1 complex (PTF1) bound to the enhancer A element.</text>
</comment>
<comment type="subunit">
    <text evidence="1 5 6 7 9 11 13 14 18 19 21">Forms a heterodimer with MEIS1 which binds DNA (PubMed:19799567). The PBX1-MEIS1 heterodimer binds a cAMP-responsive sequence in CYP17 (By similarity). It also binds a consensus region in the SOX3 promoter (PubMed:19799567). PBX1 forms heterotrimers with MEIS1 and a number of HOX proteins including HOXA9, HOXD4, HOXD9 and HOXD10 (By similarity). Forms heterodimers with HOXA1, HOXA5, HOXB7 and HOXB8 which bind the 5'-TGATTGAT-3' consensus sequence (PubMed:9191052). Also forms heterodimers with HOXA5, HOXB7, HOXB8, HOXC8 and HOXD4 which bind the 5'-ATCAATCAA-3' consensus sequence (PubMed:7791786). Interacts with PBXIP1 (PubMed:10825160). Interacts with TLX1 (PubMed:19559479). Interacts with FOXC1 (PubMed:15684392). Interacts with MN1 (PubMed:31839203).</text>
</comment>
<comment type="subunit">
    <molecule>Isoform PBX1a</molecule>
    <text evidence="15">Interacts with MEIS2 isoform 4, SP1, SP3 and KLF4.</text>
</comment>
<comment type="subunit">
    <molecule>Isoform PBX1b</molecule>
    <text evidence="1">Part of a PDX1:PBX1b:MEIS2B complex; PBX1b recruits MEIS2B to the complex.</text>
</comment>
<comment type="interaction">
    <interactant intactId="EBI-301611">
        <id>P40424</id>
    </interactant>
    <interactant intactId="EBI-5666615">
        <id>Q5PSV4</id>
        <label>BRMS1L</label>
    </interactant>
    <organismsDiffer>false</organismsDiffer>
    <experiments>3</experiments>
</comment>
<comment type="interaction">
    <interactant intactId="EBI-301611">
        <id>P40424</id>
    </interactant>
    <interactant intactId="EBI-5278764">
        <id>Q96GN5</id>
        <label>CDCA7L</label>
    </interactant>
    <organismsDiffer>false</organismsDiffer>
    <experiments>3</experiments>
</comment>
<comment type="interaction">
    <interactant intactId="EBI-301611">
        <id>P40424</id>
    </interactant>
    <interactant intactId="EBI-743105">
        <id>Q5JVL4</id>
        <label>EFHC1</label>
    </interactant>
    <organismsDiffer>false</organismsDiffer>
    <experiments>3</experiments>
</comment>
<comment type="interaction">
    <interactant intactId="EBI-301611">
        <id>P40424</id>
    </interactant>
    <interactant intactId="EBI-6658203">
        <id>Q86YD7</id>
        <label>FAM90A1</label>
    </interactant>
    <organismsDiffer>false</organismsDiffer>
    <experiments>3</experiments>
</comment>
<comment type="interaction">
    <interactant intactId="EBI-301611">
        <id>P40424</id>
    </interactant>
    <interactant intactId="EBI-1175253">
        <id>Q12948</id>
        <label>FOXC1</label>
    </interactant>
    <organismsDiffer>false</organismsDiffer>
    <experiments>5</experiments>
</comment>
<comment type="interaction">
    <interactant intactId="EBI-301611">
        <id>P40424</id>
    </interactant>
    <interactant intactId="EBI-3893317">
        <id>P09067</id>
        <label>HOXB5</label>
    </interactant>
    <organismsDiffer>false</organismsDiffer>
    <experiments>3</experiments>
</comment>
<comment type="interaction">
    <interactant intactId="EBI-301611">
        <id>P40424</id>
    </interactant>
    <interactant intactId="EBI-11955357">
        <id>Q00444</id>
        <label>HOXC5</label>
    </interactant>
    <organismsDiffer>false</organismsDiffer>
    <experiments>3</experiments>
</comment>
<comment type="interaction">
    <interactant intactId="EBI-301611">
        <id>P40424</id>
    </interactant>
    <interactant intactId="EBI-1752118">
        <id>P31273</id>
        <label>HOXC8</label>
    </interactant>
    <organismsDiffer>false</organismsDiffer>
    <experiments>3</experiments>
</comment>
<comment type="interaction">
    <interactant intactId="EBI-301611">
        <id>P40424</id>
    </interactant>
    <interactant intactId="EBI-1210694">
        <id>O00470</id>
        <label>MEIS1</label>
    </interactant>
    <organismsDiffer>false</organismsDiffer>
    <experiments>3</experiments>
</comment>
<comment type="interaction">
    <interactant intactId="EBI-301611">
        <id>P40424</id>
    </interactant>
    <interactant intactId="EBI-2804934">
        <id>O14770</id>
        <label>MEIS2</label>
    </interactant>
    <organismsDiffer>false</organismsDiffer>
    <experiments>3</experiments>
</comment>
<comment type="interaction">
    <interactant intactId="EBI-301611">
        <id>P40424</id>
    </interactant>
    <interactant intactId="EBI-8025850">
        <id>O14770-4</id>
        <label>MEIS2</label>
    </interactant>
    <organismsDiffer>false</organismsDiffer>
    <experiments>9</experiments>
</comment>
<comment type="interaction">
    <interactant intactId="EBI-301611">
        <id>P40424</id>
    </interactant>
    <interactant intactId="EBI-714158">
        <id>Q13526</id>
        <label>PIN1</label>
    </interactant>
    <organismsDiffer>false</organismsDiffer>
    <experiments>3</experiments>
</comment>
<comment type="interaction">
    <interactant intactId="EBI-301611">
        <id>P40424</id>
    </interactant>
    <interactant intactId="EBI-1373569">
        <id>P55347</id>
        <label>PKNOX1</label>
    </interactant>
    <organismsDiffer>false</organismsDiffer>
    <experiments>12</experiments>
</comment>
<comment type="interaction">
    <interactant intactId="EBI-301611">
        <id>P40424</id>
    </interactant>
    <interactant intactId="EBI-2692890">
        <id>Q96KN3</id>
        <label>PKNOX2</label>
    </interactant>
    <organismsDiffer>false</organismsDiffer>
    <experiments>3</experiments>
</comment>
<comment type="interaction">
    <interactant intactId="EBI-6390251">
        <id>P40424-2</id>
    </interactant>
    <interactant intactId="EBI-2820655">
        <id>P31314</id>
        <label>TLX1</label>
    </interactant>
    <organismsDiffer>false</organismsDiffer>
    <experiments>2</experiments>
</comment>
<comment type="subcellular location">
    <subcellularLocation>
        <location evidence="16">Nucleus</location>
    </subcellularLocation>
</comment>
<comment type="alternative products">
    <event type="alternative splicing"/>
    <isoform>
        <id>P40424-1</id>
        <name>PBX1a</name>
        <sequence type="displayed"/>
    </isoform>
    <isoform>
        <id>P40424-2</id>
        <name>PBX1b</name>
        <sequence type="described" ref="VSP_002271 VSP_002272"/>
    </isoform>
    <isoform>
        <id>P40424-3</id>
        <name>3</name>
        <sequence type="described" ref="VSP_044499"/>
    </isoform>
</comment>
<comment type="tissue specificity">
    <text evidence="16">Expressed in the kidney. Expressed in the endothelial cells of the glomeruli and interstitium (at protein level) (PubMed:28270404). Expressed in all tissues except in cells of the B and T lineage. Expressed strongly in kidney and brain (PubMed:28270404).</text>
</comment>
<comment type="domain">
    <text evidence="1">The homeobox is required for PBX1 nuclear localization and for transcriptional activation of NFIL3.</text>
</comment>
<comment type="disease" evidence="16 17">
    <disease id="DI-05075">
        <name>Congenital anomalies of kidney and urinary tract syndrome with or without hearing loss, abnormal ears, or developmental delay</name>
        <acronym>CAKUTHED</acronym>
        <description>An autosomal dominant disorder characterized by variable congenital anomalies of the kidney and urinary tract, sometimes resulting in renal dysfunction or failure, dysmorphic facial features, and abnormalities of the outer ear. Most patients have hearing loss, and some may have global developmental delay.</description>
        <dbReference type="MIM" id="617641"/>
    </disease>
    <text>The disease is caused by variants affecting the gene represented in this entry.</text>
</comment>
<comment type="disease">
    <text evidence="10 12 20">A chromosomal aberration involving PBX1 is a cause of pre-B-cell acute lymphoblastic leukemia (B-ALL). Translocation t(1;19)(q23;p13.3) with TCF3. TCF3-PBX1 transforms cells by constitutively activating transcription of genes regulated by PBX1 or by other members of the PBX protein family. TCF3-PBX1 binds the DNA sequence 5'-ATCAATCAA-3'.</text>
</comment>
<comment type="similarity">
    <text evidence="23">Belongs to the TALE/PBX homeobox family.</text>
</comment>
<comment type="sequence caution" evidence="23">
    <conflict type="erroneous initiation">
        <sequence resource="EMBL-CDS" id="AAA36764"/>
    </conflict>
    <text>Extended N-terminus.</text>
</comment>
<comment type="online information" name="Atlas of Genetics and Cytogenetics in Oncology and Haematology">
    <link uri="https://atlasgeneticsoncology.org/gene/2/PBX1"/>
</comment>
<protein>
    <recommendedName>
        <fullName>Pre-B-cell leukemia transcription factor 1</fullName>
    </recommendedName>
    <alternativeName>
        <fullName>Homeobox protein PBX1</fullName>
    </alternativeName>
    <alternativeName>
        <fullName>Homeobox protein PRL</fullName>
    </alternativeName>
</protein>
<dbReference type="EMBL" id="M86546">
    <property type="protein sequence ID" value="AAA60031.1"/>
    <property type="molecule type" value="mRNA"/>
</dbReference>
<dbReference type="EMBL" id="AF313404">
    <property type="protein sequence ID" value="AAG30941.1"/>
    <property type="molecule type" value="Genomic_DNA"/>
</dbReference>
<dbReference type="EMBL" id="AF313396">
    <property type="protein sequence ID" value="AAG30941.1"/>
    <property type="status" value="JOINED"/>
    <property type="molecule type" value="Genomic_DNA"/>
</dbReference>
<dbReference type="EMBL" id="AF313397">
    <property type="protein sequence ID" value="AAG30941.1"/>
    <property type="status" value="JOINED"/>
    <property type="molecule type" value="Genomic_DNA"/>
</dbReference>
<dbReference type="EMBL" id="AF313398">
    <property type="protein sequence ID" value="AAG30941.1"/>
    <property type="status" value="JOINED"/>
    <property type="molecule type" value="Genomic_DNA"/>
</dbReference>
<dbReference type="EMBL" id="AF313399">
    <property type="protein sequence ID" value="AAG30941.1"/>
    <property type="status" value="JOINED"/>
    <property type="molecule type" value="Genomic_DNA"/>
</dbReference>
<dbReference type="EMBL" id="AF313400">
    <property type="protein sequence ID" value="AAG30941.1"/>
    <property type="status" value="JOINED"/>
    <property type="molecule type" value="Genomic_DNA"/>
</dbReference>
<dbReference type="EMBL" id="AF313401">
    <property type="protein sequence ID" value="AAG30941.1"/>
    <property type="status" value="JOINED"/>
    <property type="molecule type" value="Genomic_DNA"/>
</dbReference>
<dbReference type="EMBL" id="AF313402">
    <property type="protein sequence ID" value="AAG30941.1"/>
    <property type="status" value="JOINED"/>
    <property type="molecule type" value="Genomic_DNA"/>
</dbReference>
<dbReference type="EMBL" id="AF313403">
    <property type="protein sequence ID" value="AAG30941.1"/>
    <property type="status" value="JOINED"/>
    <property type="molecule type" value="Genomic_DNA"/>
</dbReference>
<dbReference type="EMBL" id="AK299673">
    <property type="protein sequence ID" value="BAG61583.1"/>
    <property type="molecule type" value="mRNA"/>
</dbReference>
<dbReference type="EMBL" id="AL359255">
    <property type="status" value="NOT_ANNOTATED_CDS"/>
    <property type="molecule type" value="Genomic_DNA"/>
</dbReference>
<dbReference type="EMBL" id="AL390119">
    <property type="status" value="NOT_ANNOTATED_CDS"/>
    <property type="molecule type" value="Genomic_DNA"/>
</dbReference>
<dbReference type="EMBL" id="AL357568">
    <property type="status" value="NOT_ANNOTATED_CDS"/>
    <property type="molecule type" value="Genomic_DNA"/>
</dbReference>
<dbReference type="EMBL" id="AL391001">
    <property type="status" value="NOT_ANNOTATED_CDS"/>
    <property type="molecule type" value="Genomic_DNA"/>
</dbReference>
<dbReference type="EMBL" id="BC101578">
    <property type="protein sequence ID" value="AAI01579.1"/>
    <property type="molecule type" value="mRNA"/>
</dbReference>
<dbReference type="EMBL" id="M31522">
    <property type="protein sequence ID" value="AAA36764.1"/>
    <property type="status" value="ALT_INIT"/>
    <property type="molecule type" value="mRNA"/>
</dbReference>
<dbReference type="CCDS" id="CCDS1246.1">
    <molecule id="P40424-1"/>
</dbReference>
<dbReference type="CCDS" id="CCDS55653.1">
    <molecule id="P40424-3"/>
</dbReference>
<dbReference type="CCDS" id="CCDS55654.1">
    <molecule id="P40424-2"/>
</dbReference>
<dbReference type="PIR" id="B34734">
    <property type="entry name" value="B34734"/>
</dbReference>
<dbReference type="RefSeq" id="NP_001191890.1">
    <molecule id="P40424-2"/>
    <property type="nucleotide sequence ID" value="NM_001204961.2"/>
</dbReference>
<dbReference type="RefSeq" id="NP_001191892.1">
    <molecule id="P40424-3"/>
    <property type="nucleotide sequence ID" value="NM_001204963.2"/>
</dbReference>
<dbReference type="RefSeq" id="NP_001340060.1">
    <molecule id="P40424-2"/>
    <property type="nucleotide sequence ID" value="NM_001353131.2"/>
</dbReference>
<dbReference type="RefSeq" id="NP_002576.1">
    <molecule id="P40424-1"/>
    <property type="nucleotide sequence ID" value="NM_002585.4"/>
</dbReference>
<dbReference type="RefSeq" id="XP_005245286.1">
    <molecule id="P40424-1"/>
    <property type="nucleotide sequence ID" value="XM_005245229.4"/>
</dbReference>
<dbReference type="RefSeq" id="XP_047277740.1">
    <molecule id="P40424-2"/>
    <property type="nucleotide sequence ID" value="XM_047421784.1"/>
</dbReference>
<dbReference type="RefSeq" id="XP_054192811.1">
    <molecule id="P40424-1"/>
    <property type="nucleotide sequence ID" value="XM_054336836.1"/>
</dbReference>
<dbReference type="RefSeq" id="XP_054192814.1">
    <molecule id="P40424-2"/>
    <property type="nucleotide sequence ID" value="XM_054336839.1"/>
</dbReference>
<dbReference type="PDB" id="1B72">
    <property type="method" value="X-ray"/>
    <property type="resolution" value="2.35 A"/>
    <property type="chains" value="B=233-319"/>
</dbReference>
<dbReference type="PDB" id="1PUF">
    <property type="method" value="X-ray"/>
    <property type="resolution" value="1.90 A"/>
    <property type="chains" value="B=233-305"/>
</dbReference>
<dbReference type="PDBsum" id="1B72"/>
<dbReference type="PDBsum" id="1PUF"/>
<dbReference type="BMRB" id="P40424"/>
<dbReference type="SASBDB" id="P40424"/>
<dbReference type="SMR" id="P40424"/>
<dbReference type="BioGRID" id="111120">
    <property type="interactions" value="73"/>
</dbReference>
<dbReference type="CORUM" id="P40424"/>
<dbReference type="FunCoup" id="P40424">
    <property type="interactions" value="4354"/>
</dbReference>
<dbReference type="IntAct" id="P40424">
    <property type="interactions" value="37"/>
</dbReference>
<dbReference type="MINT" id="P40424"/>
<dbReference type="STRING" id="9606.ENSP00000405890"/>
<dbReference type="GlyGen" id="P40424">
    <property type="glycosylation" value="1 site"/>
</dbReference>
<dbReference type="iPTMnet" id="P40424"/>
<dbReference type="MetOSite" id="P40424"/>
<dbReference type="PhosphoSitePlus" id="P40424"/>
<dbReference type="BioMuta" id="PBX1"/>
<dbReference type="DMDM" id="730279"/>
<dbReference type="jPOST" id="P40424"/>
<dbReference type="MassIVE" id="P40424"/>
<dbReference type="PaxDb" id="9606-ENSP00000405890"/>
<dbReference type="PeptideAtlas" id="P40424"/>
<dbReference type="ProteomicsDB" id="26680"/>
<dbReference type="ProteomicsDB" id="55367">
    <molecule id="P40424-1"/>
</dbReference>
<dbReference type="ProteomicsDB" id="55368">
    <molecule id="P40424-2"/>
</dbReference>
<dbReference type="Pumba" id="P40424"/>
<dbReference type="Antibodypedia" id="1079">
    <property type="antibodies" value="427 antibodies from 36 providers"/>
</dbReference>
<dbReference type="DNASU" id="5087"/>
<dbReference type="Ensembl" id="ENST00000367897.5">
    <molecule id="P40424-2"/>
    <property type="protein sequence ID" value="ENSP00000356872.1"/>
    <property type="gene ID" value="ENSG00000185630.20"/>
</dbReference>
<dbReference type="Ensembl" id="ENST00000420696.7">
    <molecule id="P40424-1"/>
    <property type="protein sequence ID" value="ENSP00000405890.2"/>
    <property type="gene ID" value="ENSG00000185630.20"/>
</dbReference>
<dbReference type="Ensembl" id="ENST00000627490.2">
    <molecule id="P40424-3"/>
    <property type="protein sequence ID" value="ENSP00000485692.1"/>
    <property type="gene ID" value="ENSG00000185630.20"/>
</dbReference>
<dbReference type="Ensembl" id="ENST00000699845.1">
    <molecule id="P40424-2"/>
    <property type="protein sequence ID" value="ENSP00000514643.1"/>
    <property type="gene ID" value="ENSG00000185630.20"/>
</dbReference>
<dbReference type="GeneID" id="5087"/>
<dbReference type="KEGG" id="hsa:5087"/>
<dbReference type="MANE-Select" id="ENST00000420696.7">
    <property type="protein sequence ID" value="ENSP00000405890.2"/>
    <property type="RefSeq nucleotide sequence ID" value="NM_002585.4"/>
    <property type="RefSeq protein sequence ID" value="NP_002576.1"/>
</dbReference>
<dbReference type="UCSC" id="uc001gct.4">
    <molecule id="P40424-1"/>
    <property type="organism name" value="human"/>
</dbReference>
<dbReference type="AGR" id="HGNC:8632"/>
<dbReference type="CTD" id="5087"/>
<dbReference type="DisGeNET" id="5087"/>
<dbReference type="GeneCards" id="PBX1"/>
<dbReference type="HGNC" id="HGNC:8632">
    <property type="gene designation" value="PBX1"/>
</dbReference>
<dbReference type="HPA" id="ENSG00000185630">
    <property type="expression patterns" value="Low tissue specificity"/>
</dbReference>
<dbReference type="MalaCards" id="PBX1"/>
<dbReference type="MIM" id="176310">
    <property type="type" value="gene"/>
</dbReference>
<dbReference type="MIM" id="617641">
    <property type="type" value="phenotype"/>
</dbReference>
<dbReference type="neXtProt" id="NX_P40424"/>
<dbReference type="OpenTargets" id="ENSG00000185630"/>
<dbReference type="Orphanet" id="585956">
    <property type="disease" value="B-lymphoblastic leukemia/lymphoma with t(1;19)(q23;p13.3)"/>
</dbReference>
<dbReference type="Orphanet" id="656130">
    <property type="disease" value="PBX1-related congenital anomalies of kidney-urinary tract syndrome"/>
</dbReference>
<dbReference type="Orphanet" id="97362">
    <property type="disease" value="Renal hypoplasia, bilateral"/>
</dbReference>
<dbReference type="PharmGKB" id="PA32970"/>
<dbReference type="VEuPathDB" id="HostDB:ENSG00000185630"/>
<dbReference type="eggNOG" id="KOG0774">
    <property type="taxonomic scope" value="Eukaryota"/>
</dbReference>
<dbReference type="GeneTree" id="ENSGT00940000154374"/>
<dbReference type="HOGENOM" id="CLU_041153_1_0_1"/>
<dbReference type="InParanoid" id="P40424"/>
<dbReference type="OMA" id="CHRMRHA"/>
<dbReference type="OrthoDB" id="4187154at2759"/>
<dbReference type="PAN-GO" id="P40424">
    <property type="GO annotations" value="8 GO annotations based on evolutionary models"/>
</dbReference>
<dbReference type="PhylomeDB" id="P40424"/>
<dbReference type="TreeFam" id="TF314340"/>
<dbReference type="PathwayCommons" id="P40424"/>
<dbReference type="Reactome" id="R-HSA-452723">
    <property type="pathway name" value="Transcriptional regulation of pluripotent stem cells"/>
</dbReference>
<dbReference type="Reactome" id="R-HSA-5617472">
    <property type="pathway name" value="Activation of anterior HOX genes in hindbrain development during early embryogenesis"/>
</dbReference>
<dbReference type="Reactome" id="R-HSA-9013508">
    <property type="pathway name" value="NOTCH3 Intracellular Domain Regulates Transcription"/>
</dbReference>
<dbReference type="SignaLink" id="P40424"/>
<dbReference type="SIGNOR" id="P40424"/>
<dbReference type="BioGRID-ORCS" id="5087">
    <property type="hits" value="19 hits in 1170 CRISPR screens"/>
</dbReference>
<dbReference type="ChiTaRS" id="PBX1">
    <property type="organism name" value="human"/>
</dbReference>
<dbReference type="EvolutionaryTrace" id="P40424"/>
<dbReference type="GeneWiki" id="PBX1"/>
<dbReference type="GenomeRNAi" id="5087"/>
<dbReference type="Pharos" id="P40424">
    <property type="development level" value="Tbio"/>
</dbReference>
<dbReference type="PRO" id="PR:P40424"/>
<dbReference type="Proteomes" id="UP000005640">
    <property type="component" value="Chromosome 1"/>
</dbReference>
<dbReference type="RNAct" id="P40424">
    <property type="molecule type" value="protein"/>
</dbReference>
<dbReference type="Bgee" id="ENSG00000185630">
    <property type="expression patterns" value="Expressed in cortical plate and 212 other cell types or tissues"/>
</dbReference>
<dbReference type="ExpressionAtlas" id="P40424">
    <property type="expression patterns" value="baseline and differential"/>
</dbReference>
<dbReference type="GO" id="GO:0000785">
    <property type="term" value="C:chromatin"/>
    <property type="evidence" value="ECO:0000247"/>
    <property type="project" value="NTNU_SB"/>
</dbReference>
<dbReference type="GO" id="GO:0005737">
    <property type="term" value="C:cytoplasm"/>
    <property type="evidence" value="ECO:0000314"/>
    <property type="project" value="UniProtKB"/>
</dbReference>
<dbReference type="GO" id="GO:0005654">
    <property type="term" value="C:nucleoplasm"/>
    <property type="evidence" value="ECO:0000314"/>
    <property type="project" value="HPA"/>
</dbReference>
<dbReference type="GO" id="GO:0005634">
    <property type="term" value="C:nucleus"/>
    <property type="evidence" value="ECO:0000314"/>
    <property type="project" value="UniProtKB"/>
</dbReference>
<dbReference type="GO" id="GO:0090575">
    <property type="term" value="C:RNA polymerase II transcription regulator complex"/>
    <property type="evidence" value="ECO:0000314"/>
    <property type="project" value="NTNU_SB"/>
</dbReference>
<dbReference type="GO" id="GO:0003677">
    <property type="term" value="F:DNA binding"/>
    <property type="evidence" value="ECO:0000314"/>
    <property type="project" value="UniProtKB"/>
</dbReference>
<dbReference type="GO" id="GO:0001228">
    <property type="term" value="F:DNA-binding transcription activator activity, RNA polymerase II-specific"/>
    <property type="evidence" value="ECO:0007669"/>
    <property type="project" value="Ensembl"/>
</dbReference>
<dbReference type="GO" id="GO:0003700">
    <property type="term" value="F:DNA-binding transcription factor activity"/>
    <property type="evidence" value="ECO:0000303"/>
    <property type="project" value="ProtInc"/>
</dbReference>
<dbReference type="GO" id="GO:0000981">
    <property type="term" value="F:DNA-binding transcription factor activity, RNA polymerase II-specific"/>
    <property type="evidence" value="ECO:0000250"/>
    <property type="project" value="UniProtKB"/>
</dbReference>
<dbReference type="GO" id="GO:0140297">
    <property type="term" value="F:DNA-binding transcription factor binding"/>
    <property type="evidence" value="ECO:0000353"/>
    <property type="project" value="UniProtKB"/>
</dbReference>
<dbReference type="GO" id="GO:0000978">
    <property type="term" value="F:RNA polymerase II cis-regulatory region sequence-specific DNA binding"/>
    <property type="evidence" value="ECO:0007669"/>
    <property type="project" value="Ensembl"/>
</dbReference>
<dbReference type="GO" id="GO:1990837">
    <property type="term" value="F:sequence-specific double-stranded DNA binding"/>
    <property type="evidence" value="ECO:0000314"/>
    <property type="project" value="UniProtKB"/>
</dbReference>
<dbReference type="GO" id="GO:0000976">
    <property type="term" value="F:transcription cis-regulatory region binding"/>
    <property type="evidence" value="ECO:0000314"/>
    <property type="project" value="UniProtKB"/>
</dbReference>
<dbReference type="GO" id="GO:0001221">
    <property type="term" value="F:transcription coregulator binding"/>
    <property type="evidence" value="ECO:0000353"/>
    <property type="project" value="UniProtKB"/>
</dbReference>
<dbReference type="GO" id="GO:0001222">
    <property type="term" value="F:transcription corepressor binding"/>
    <property type="evidence" value="ECO:0000353"/>
    <property type="project" value="UniProtKB"/>
</dbReference>
<dbReference type="GO" id="GO:0030325">
    <property type="term" value="P:adrenal gland development"/>
    <property type="evidence" value="ECO:0007669"/>
    <property type="project" value="Ensembl"/>
</dbReference>
<dbReference type="GO" id="GO:0009887">
    <property type="term" value="P:animal organ morphogenesis"/>
    <property type="evidence" value="ECO:0000318"/>
    <property type="project" value="GO_Central"/>
</dbReference>
<dbReference type="GO" id="GO:0009952">
    <property type="term" value="P:anterior/posterior pattern specification"/>
    <property type="evidence" value="ECO:0007669"/>
    <property type="project" value="Ensembl"/>
</dbReference>
<dbReference type="GO" id="GO:0007420">
    <property type="term" value="P:brain development"/>
    <property type="evidence" value="ECO:0000318"/>
    <property type="project" value="GO_Central"/>
</dbReference>
<dbReference type="GO" id="GO:0001658">
    <property type="term" value="P:branching involved in ureteric bud morphogenesis"/>
    <property type="evidence" value="ECO:0007669"/>
    <property type="project" value="Ensembl"/>
</dbReference>
<dbReference type="GO" id="GO:0035162">
    <property type="term" value="P:embryonic hemopoiesis"/>
    <property type="evidence" value="ECO:0007669"/>
    <property type="project" value="Ensembl"/>
</dbReference>
<dbReference type="GO" id="GO:0030326">
    <property type="term" value="P:embryonic limb morphogenesis"/>
    <property type="evidence" value="ECO:0007669"/>
    <property type="project" value="Ensembl"/>
</dbReference>
<dbReference type="GO" id="GO:0048568">
    <property type="term" value="P:embryonic organ development"/>
    <property type="evidence" value="ECO:0000318"/>
    <property type="project" value="GO_Central"/>
</dbReference>
<dbReference type="GO" id="GO:0048706">
    <property type="term" value="P:embryonic skeletal system development"/>
    <property type="evidence" value="ECO:0007669"/>
    <property type="project" value="Ensembl"/>
</dbReference>
<dbReference type="GO" id="GO:0001654">
    <property type="term" value="P:eye development"/>
    <property type="evidence" value="ECO:0000318"/>
    <property type="project" value="GO_Central"/>
</dbReference>
<dbReference type="GO" id="GO:0000086">
    <property type="term" value="P:G2/M transition of mitotic cell cycle"/>
    <property type="evidence" value="ECO:0007669"/>
    <property type="project" value="Ensembl"/>
</dbReference>
<dbReference type="GO" id="GO:0001779">
    <property type="term" value="P:natural killer cell differentiation"/>
    <property type="evidence" value="ECO:0000250"/>
    <property type="project" value="UniProtKB"/>
</dbReference>
<dbReference type="GO" id="GO:0043433">
    <property type="term" value="P:negative regulation of DNA-binding transcription factor activity"/>
    <property type="evidence" value="ECO:0000314"/>
    <property type="project" value="UniProtKB"/>
</dbReference>
<dbReference type="GO" id="GO:0045665">
    <property type="term" value="P:negative regulation of neuron differentiation"/>
    <property type="evidence" value="ECO:0007669"/>
    <property type="project" value="Ensembl"/>
</dbReference>
<dbReference type="GO" id="GO:0048666">
    <property type="term" value="P:neuron development"/>
    <property type="evidence" value="ECO:0000318"/>
    <property type="project" value="GO_Central"/>
</dbReference>
<dbReference type="GO" id="GO:0010971">
    <property type="term" value="P:positive regulation of G2/M transition of mitotic cell cycle"/>
    <property type="evidence" value="ECO:0007669"/>
    <property type="project" value="Ensembl"/>
</dbReference>
<dbReference type="GO" id="GO:2000648">
    <property type="term" value="P:positive regulation of stem cell proliferation"/>
    <property type="evidence" value="ECO:0007669"/>
    <property type="project" value="Ensembl"/>
</dbReference>
<dbReference type="GO" id="GO:0045944">
    <property type="term" value="P:positive regulation of transcription by RNA polymerase II"/>
    <property type="evidence" value="ECO:0000250"/>
    <property type="project" value="UniProtKB"/>
</dbReference>
<dbReference type="GO" id="GO:0009954">
    <property type="term" value="P:proximal/distal pattern formation"/>
    <property type="evidence" value="ECO:0007669"/>
    <property type="project" value="Ensembl"/>
</dbReference>
<dbReference type="GO" id="GO:0030278">
    <property type="term" value="P:regulation of ossification"/>
    <property type="evidence" value="ECO:0007669"/>
    <property type="project" value="Ensembl"/>
</dbReference>
<dbReference type="GO" id="GO:0007548">
    <property type="term" value="P:sex differentiation"/>
    <property type="evidence" value="ECO:0007669"/>
    <property type="project" value="UniProtKB-KW"/>
</dbReference>
<dbReference type="GO" id="GO:0048536">
    <property type="term" value="P:spleen development"/>
    <property type="evidence" value="ECO:0007669"/>
    <property type="project" value="Ensembl"/>
</dbReference>
<dbReference type="GO" id="GO:0072089">
    <property type="term" value="P:stem cell proliferation"/>
    <property type="evidence" value="ECO:0007669"/>
    <property type="project" value="Ensembl"/>
</dbReference>
<dbReference type="GO" id="GO:0006694">
    <property type="term" value="P:steroid biosynthetic process"/>
    <property type="evidence" value="ECO:0007669"/>
    <property type="project" value="UniProtKB-KW"/>
</dbReference>
<dbReference type="GO" id="GO:0048538">
    <property type="term" value="P:thymus development"/>
    <property type="evidence" value="ECO:0007669"/>
    <property type="project" value="Ensembl"/>
</dbReference>
<dbReference type="GO" id="GO:0001655">
    <property type="term" value="P:urogenital system development"/>
    <property type="evidence" value="ECO:0007669"/>
    <property type="project" value="Ensembl"/>
</dbReference>
<dbReference type="CDD" id="cd00086">
    <property type="entry name" value="homeodomain"/>
    <property type="match status" value="1"/>
</dbReference>
<dbReference type="FunFam" id="1.10.10.60:FF:000277">
    <property type="entry name" value="Pre-B-cell leukemia transcription factor 1"/>
    <property type="match status" value="1"/>
</dbReference>
<dbReference type="Gene3D" id="1.10.10.60">
    <property type="entry name" value="Homeodomain-like"/>
    <property type="match status" value="1"/>
</dbReference>
<dbReference type="IDEAL" id="IID00149"/>
<dbReference type="InterPro" id="IPR001356">
    <property type="entry name" value="HD"/>
</dbReference>
<dbReference type="InterPro" id="IPR017970">
    <property type="entry name" value="Homeobox_CS"/>
</dbReference>
<dbReference type="InterPro" id="IPR009057">
    <property type="entry name" value="Homeodomain-like_sf"/>
</dbReference>
<dbReference type="InterPro" id="IPR008422">
    <property type="entry name" value="KN_HD"/>
</dbReference>
<dbReference type="InterPro" id="IPR005542">
    <property type="entry name" value="PBX_PBC_dom"/>
</dbReference>
<dbReference type="InterPro" id="IPR050224">
    <property type="entry name" value="TALE_homeobox"/>
</dbReference>
<dbReference type="PANTHER" id="PTHR11850">
    <property type="entry name" value="HOMEOBOX PROTEIN TRANSCRIPTION FACTORS"/>
    <property type="match status" value="1"/>
</dbReference>
<dbReference type="Pfam" id="PF05920">
    <property type="entry name" value="Homeobox_KN"/>
    <property type="match status" value="1"/>
</dbReference>
<dbReference type="Pfam" id="PF03792">
    <property type="entry name" value="PBC"/>
    <property type="match status" value="1"/>
</dbReference>
<dbReference type="SMART" id="SM00389">
    <property type="entry name" value="HOX"/>
    <property type="match status" value="1"/>
</dbReference>
<dbReference type="SUPFAM" id="SSF46689">
    <property type="entry name" value="Homeodomain-like"/>
    <property type="match status" value="1"/>
</dbReference>
<dbReference type="PROSITE" id="PS00027">
    <property type="entry name" value="HOMEOBOX_1"/>
    <property type="match status" value="1"/>
</dbReference>
<dbReference type="PROSITE" id="PS50071">
    <property type="entry name" value="HOMEOBOX_2"/>
    <property type="match status" value="1"/>
</dbReference>
<dbReference type="PROSITE" id="PS51978">
    <property type="entry name" value="PBC"/>
    <property type="match status" value="1"/>
</dbReference>
<keyword id="KW-0002">3D-structure</keyword>
<keyword id="KW-0010">Activator</keyword>
<keyword id="KW-0025">Alternative splicing</keyword>
<keyword id="KW-0160">Chromosomal rearrangement</keyword>
<keyword id="KW-0217">Developmental protein</keyword>
<keyword id="KW-0221">Differentiation</keyword>
<keyword id="KW-0225">Disease variant</keyword>
<keyword id="KW-0238">DNA-binding</keyword>
<keyword id="KW-0371">Homeobox</keyword>
<keyword id="KW-0539">Nucleus</keyword>
<keyword id="KW-1267">Proteomics identification</keyword>
<keyword id="KW-0656">Proto-oncogene</keyword>
<keyword id="KW-1185">Reference proteome</keyword>
<keyword id="KW-0678">Repressor</keyword>
<keyword id="KW-0726">Sexual differentiation</keyword>
<keyword id="KW-0755">Steroidogenesis</keyword>
<keyword id="KW-0804">Transcription</keyword>
<keyword id="KW-0805">Transcription regulation</keyword>
<evidence type="ECO:0000250" key="1">
    <source>
        <dbReference type="UniProtKB" id="P41778"/>
    </source>
</evidence>
<evidence type="ECO:0000255" key="2">
    <source>
        <dbReference type="PROSITE-ProRule" id="PRU00108"/>
    </source>
</evidence>
<evidence type="ECO:0000255" key="3">
    <source>
        <dbReference type="PROSITE-ProRule" id="PRU01322"/>
    </source>
</evidence>
<evidence type="ECO:0000256" key="4">
    <source>
        <dbReference type="SAM" id="MobiDB-lite"/>
    </source>
</evidence>
<evidence type="ECO:0000269" key="5">
    <source>
    </source>
</evidence>
<evidence type="ECO:0000269" key="6">
    <source>
    </source>
</evidence>
<evidence type="ECO:0000269" key="7">
    <source>
    </source>
</evidence>
<evidence type="ECO:0000269" key="8">
    <source>
    </source>
</evidence>
<evidence type="ECO:0000269" key="9">
    <source>
    </source>
</evidence>
<evidence type="ECO:0000269" key="10">
    <source>
    </source>
</evidence>
<evidence type="ECO:0000269" key="11">
    <source>
    </source>
</evidence>
<evidence type="ECO:0000269" key="12">
    <source>
    </source>
</evidence>
<evidence type="ECO:0000269" key="13">
    <source>
    </source>
</evidence>
<evidence type="ECO:0000269" key="14">
    <source>
    </source>
</evidence>
<evidence type="ECO:0000269" key="15">
    <source>
    </source>
</evidence>
<evidence type="ECO:0000269" key="16">
    <source>
    </source>
</evidence>
<evidence type="ECO:0000269" key="17">
    <source>
    </source>
</evidence>
<evidence type="ECO:0000269" key="18">
    <source>
    </source>
</evidence>
<evidence type="ECO:0000269" key="19">
    <source>
    </source>
</evidence>
<evidence type="ECO:0000269" key="20">
    <source>
    </source>
</evidence>
<evidence type="ECO:0000269" key="21">
    <source>
    </source>
</evidence>
<evidence type="ECO:0000303" key="22">
    <source>
    </source>
</evidence>
<evidence type="ECO:0000305" key="23"/>
<evidence type="ECO:0007829" key="24">
    <source>
        <dbReference type="PDB" id="1PUF"/>
    </source>
</evidence>